<evidence type="ECO:0000255" key="1">
    <source>
        <dbReference type="HAMAP-Rule" id="MF_00270"/>
    </source>
</evidence>
<evidence type="ECO:0000305" key="2"/>
<comment type="subunit">
    <text>Part of the 30S ribosomal subunit.</text>
</comment>
<comment type="subcellular location">
    <subcellularLocation>
        <location>Plastid</location>
        <location>Chloroplast</location>
    </subcellularLocation>
</comment>
<comment type="similarity">
    <text evidence="1">Belongs to the bacterial ribosomal protein bS18 family.</text>
</comment>
<proteinExistence type="inferred from homology"/>
<name>RR18_MORIN</name>
<accession>Q09WZ5</accession>
<sequence>MDKSKRLFLKSKRSFRRRLPPIQSGDRIDYRNMSLISRFISEQGKILSRRVNRLTLKQQRLITIAIKQARILCLLPFLNNEKQFERSESTPRTTGLRIKNK</sequence>
<feature type="chain" id="PRO_0000276876" description="Small ribosomal subunit protein bS18c">
    <location>
        <begin position="1"/>
        <end position="101"/>
    </location>
</feature>
<geneLocation type="chloroplast"/>
<dbReference type="EMBL" id="DQ226511">
    <property type="protein sequence ID" value="ABB20978.1"/>
    <property type="molecule type" value="Genomic_DNA"/>
</dbReference>
<dbReference type="RefSeq" id="YP_762283.1">
    <property type="nucleotide sequence ID" value="NC_008359.1"/>
</dbReference>
<dbReference type="SMR" id="Q09WZ5"/>
<dbReference type="GeneID" id="4290642"/>
<dbReference type="GO" id="GO:0009507">
    <property type="term" value="C:chloroplast"/>
    <property type="evidence" value="ECO:0007669"/>
    <property type="project" value="UniProtKB-SubCell"/>
</dbReference>
<dbReference type="GO" id="GO:0005763">
    <property type="term" value="C:mitochondrial small ribosomal subunit"/>
    <property type="evidence" value="ECO:0007669"/>
    <property type="project" value="TreeGrafter"/>
</dbReference>
<dbReference type="GO" id="GO:0070181">
    <property type="term" value="F:small ribosomal subunit rRNA binding"/>
    <property type="evidence" value="ECO:0007669"/>
    <property type="project" value="TreeGrafter"/>
</dbReference>
<dbReference type="GO" id="GO:0003735">
    <property type="term" value="F:structural constituent of ribosome"/>
    <property type="evidence" value="ECO:0007669"/>
    <property type="project" value="InterPro"/>
</dbReference>
<dbReference type="GO" id="GO:0006412">
    <property type="term" value="P:translation"/>
    <property type="evidence" value="ECO:0007669"/>
    <property type="project" value="UniProtKB-UniRule"/>
</dbReference>
<dbReference type="FunFam" id="4.10.640.10:FF:000002">
    <property type="entry name" value="30S ribosomal protein S18, chloroplastic"/>
    <property type="match status" value="1"/>
</dbReference>
<dbReference type="Gene3D" id="4.10.640.10">
    <property type="entry name" value="Ribosomal protein S18"/>
    <property type="match status" value="1"/>
</dbReference>
<dbReference type="HAMAP" id="MF_00270">
    <property type="entry name" value="Ribosomal_bS18"/>
    <property type="match status" value="1"/>
</dbReference>
<dbReference type="InterPro" id="IPR001648">
    <property type="entry name" value="Ribosomal_bS18"/>
</dbReference>
<dbReference type="InterPro" id="IPR018275">
    <property type="entry name" value="Ribosomal_bS18_CS"/>
</dbReference>
<dbReference type="InterPro" id="IPR036870">
    <property type="entry name" value="Ribosomal_bS18_sf"/>
</dbReference>
<dbReference type="NCBIfam" id="TIGR00165">
    <property type="entry name" value="S18"/>
    <property type="match status" value="1"/>
</dbReference>
<dbReference type="PANTHER" id="PTHR13479">
    <property type="entry name" value="30S RIBOSOMAL PROTEIN S18"/>
    <property type="match status" value="1"/>
</dbReference>
<dbReference type="PANTHER" id="PTHR13479:SF40">
    <property type="entry name" value="SMALL RIBOSOMAL SUBUNIT PROTEIN BS18M"/>
    <property type="match status" value="1"/>
</dbReference>
<dbReference type="Pfam" id="PF01084">
    <property type="entry name" value="Ribosomal_S18"/>
    <property type="match status" value="1"/>
</dbReference>
<dbReference type="PRINTS" id="PR00974">
    <property type="entry name" value="RIBOSOMALS18"/>
</dbReference>
<dbReference type="SUPFAM" id="SSF46911">
    <property type="entry name" value="Ribosomal protein S18"/>
    <property type="match status" value="1"/>
</dbReference>
<dbReference type="PROSITE" id="PS00057">
    <property type="entry name" value="RIBOSOMAL_S18"/>
    <property type="match status" value="1"/>
</dbReference>
<protein>
    <recommendedName>
        <fullName evidence="1">Small ribosomal subunit protein bS18c</fullName>
    </recommendedName>
    <alternativeName>
        <fullName evidence="2">30S ribosomal protein S18, chloroplastic</fullName>
    </alternativeName>
</protein>
<gene>
    <name evidence="1" type="primary">rps18</name>
    <name type="ordered locus">MoinCp043</name>
</gene>
<reference key="1">
    <citation type="submission" date="2005-09" db="EMBL/GenBank/DDBJ databases">
        <title>The chloroplast genome of mulberry: structural features and comparative analysis.</title>
        <authorList>
            <person name="Ravi V."/>
            <person name="Khurana J.P."/>
            <person name="Tyagi A.K."/>
            <person name="Khurana P."/>
        </authorList>
    </citation>
    <scope>NUCLEOTIDE SEQUENCE [LARGE SCALE GENOMIC DNA]</scope>
    <source>
        <strain>cv. K2</strain>
    </source>
</reference>
<organism>
    <name type="scientific">Morus indica</name>
    <name type="common">Mulberry</name>
    <dbReference type="NCBI Taxonomy" id="248361"/>
    <lineage>
        <taxon>Eukaryota</taxon>
        <taxon>Viridiplantae</taxon>
        <taxon>Streptophyta</taxon>
        <taxon>Embryophyta</taxon>
        <taxon>Tracheophyta</taxon>
        <taxon>Spermatophyta</taxon>
        <taxon>Magnoliopsida</taxon>
        <taxon>eudicotyledons</taxon>
        <taxon>Gunneridae</taxon>
        <taxon>Pentapetalae</taxon>
        <taxon>rosids</taxon>
        <taxon>fabids</taxon>
        <taxon>Rosales</taxon>
        <taxon>Moraceae</taxon>
        <taxon>Moreae</taxon>
        <taxon>Morus</taxon>
    </lineage>
</organism>
<keyword id="KW-0150">Chloroplast</keyword>
<keyword id="KW-0934">Plastid</keyword>
<keyword id="KW-0687">Ribonucleoprotein</keyword>
<keyword id="KW-0689">Ribosomal protein</keyword>
<keyword id="KW-0694">RNA-binding</keyword>
<keyword id="KW-0699">rRNA-binding</keyword>